<dbReference type="EMBL" id="X56175">
    <property type="protein sequence ID" value="CAA39634.1"/>
    <property type="molecule type" value="Genomic_DNA"/>
</dbReference>
<dbReference type="EMBL" id="U82664">
    <property type="protein sequence ID" value="AAB40164.1"/>
    <property type="molecule type" value="Genomic_DNA"/>
</dbReference>
<dbReference type="EMBL" id="U00096">
    <property type="protein sequence ID" value="AAC73511.1"/>
    <property type="molecule type" value="Genomic_DNA"/>
</dbReference>
<dbReference type="EMBL" id="AP009048">
    <property type="protein sequence ID" value="BAE76188.1"/>
    <property type="molecule type" value="Genomic_DNA"/>
</dbReference>
<dbReference type="EMBL" id="S68715">
    <property type="protein sequence ID" value="AAC60469.2"/>
    <property type="molecule type" value="Genomic_DNA"/>
</dbReference>
<dbReference type="PIR" id="H64769">
    <property type="entry name" value="H64769"/>
</dbReference>
<dbReference type="RefSeq" id="NP_414942.1">
    <property type="nucleotide sequence ID" value="NC_000913.3"/>
</dbReference>
<dbReference type="RefSeq" id="WP_000934822.1">
    <property type="nucleotide sequence ID" value="NZ_STEB01000007.1"/>
</dbReference>
<dbReference type="PDB" id="5MG3">
    <property type="method" value="EM"/>
    <property type="resolution" value="14.00 A"/>
    <property type="chains" value="D=2-615"/>
</dbReference>
<dbReference type="PDBsum" id="5MG3"/>
<dbReference type="EMDB" id="EMD-3506"/>
<dbReference type="SMR" id="P0AG90"/>
<dbReference type="BioGRID" id="4263096">
    <property type="interactions" value="318"/>
</dbReference>
<dbReference type="BioGRID" id="853372">
    <property type="interactions" value="1"/>
</dbReference>
<dbReference type="ComplexPortal" id="CPX-1095">
    <property type="entry name" value="Holo-translocon SecYEG-SecDF-YajC-YidC complex"/>
</dbReference>
<dbReference type="DIP" id="DIP-35837N"/>
<dbReference type="FunCoup" id="P0AG90">
    <property type="interactions" value="473"/>
</dbReference>
<dbReference type="IntAct" id="P0AG90">
    <property type="interactions" value="10"/>
</dbReference>
<dbReference type="MINT" id="P0AG90"/>
<dbReference type="STRING" id="511145.b0408"/>
<dbReference type="TCDB" id="2.A.6.4.1">
    <property type="family name" value="the resistance-nodulation-cell division (rnd) superfamily"/>
</dbReference>
<dbReference type="jPOST" id="P0AG90"/>
<dbReference type="PaxDb" id="511145-b0408"/>
<dbReference type="EnsemblBacteria" id="AAC73511">
    <property type="protein sequence ID" value="AAC73511"/>
    <property type="gene ID" value="b0408"/>
</dbReference>
<dbReference type="GeneID" id="93777052"/>
<dbReference type="GeneID" id="949133"/>
<dbReference type="KEGG" id="ecj:JW0398"/>
<dbReference type="KEGG" id="eco:b0408"/>
<dbReference type="KEGG" id="ecoc:C3026_01985"/>
<dbReference type="PATRIC" id="fig|511145.12.peg.424"/>
<dbReference type="EchoBASE" id="EB0931"/>
<dbReference type="eggNOG" id="COG0342">
    <property type="taxonomic scope" value="Bacteria"/>
</dbReference>
<dbReference type="HOGENOM" id="CLU_007894_4_3_6"/>
<dbReference type="InParanoid" id="P0AG90"/>
<dbReference type="OMA" id="NIEKGFH"/>
<dbReference type="OrthoDB" id="9805019at2"/>
<dbReference type="PhylomeDB" id="P0AG90"/>
<dbReference type="BioCyc" id="EcoCyc:SECD"/>
<dbReference type="BioCyc" id="MetaCyc:SECD"/>
<dbReference type="PRO" id="PR:P0AG90"/>
<dbReference type="Proteomes" id="UP000000625">
    <property type="component" value="Chromosome"/>
</dbReference>
<dbReference type="GO" id="GO:0031522">
    <property type="term" value="C:cell envelope Sec protein transport complex"/>
    <property type="evidence" value="ECO:0000353"/>
    <property type="project" value="ComplexPortal"/>
</dbReference>
<dbReference type="GO" id="GO:0016020">
    <property type="term" value="C:membrane"/>
    <property type="evidence" value="ECO:0000303"/>
    <property type="project" value="ComplexPortal"/>
</dbReference>
<dbReference type="GO" id="GO:0005886">
    <property type="term" value="C:plasma membrane"/>
    <property type="evidence" value="ECO:0000314"/>
    <property type="project" value="EcoCyc"/>
</dbReference>
<dbReference type="GO" id="GO:0015450">
    <property type="term" value="F:protein-transporting ATPase activity"/>
    <property type="evidence" value="ECO:0007669"/>
    <property type="project" value="InterPro"/>
</dbReference>
<dbReference type="GO" id="GO:0065002">
    <property type="term" value="P:intracellular protein transmembrane transport"/>
    <property type="evidence" value="ECO:0007669"/>
    <property type="project" value="UniProtKB-UniRule"/>
</dbReference>
<dbReference type="GO" id="GO:0032978">
    <property type="term" value="P:protein insertion into membrane from inner side"/>
    <property type="evidence" value="ECO:0000314"/>
    <property type="project" value="ComplexPortal"/>
</dbReference>
<dbReference type="GO" id="GO:0006605">
    <property type="term" value="P:protein targeting"/>
    <property type="evidence" value="ECO:0007669"/>
    <property type="project" value="UniProtKB-UniRule"/>
</dbReference>
<dbReference type="GO" id="GO:0015031">
    <property type="term" value="P:protein transport"/>
    <property type="evidence" value="ECO:0000315"/>
    <property type="project" value="EcoliWiki"/>
</dbReference>
<dbReference type="GO" id="GO:0043952">
    <property type="term" value="P:protein transport by the Sec complex"/>
    <property type="evidence" value="ECO:0000314"/>
    <property type="project" value="ComplexPortal"/>
</dbReference>
<dbReference type="FunFam" id="1.20.1640.10:FF:000004">
    <property type="entry name" value="Protein translocase subunit SecD"/>
    <property type="match status" value="1"/>
</dbReference>
<dbReference type="FunFam" id="3.30.1360.200:FF:000001">
    <property type="entry name" value="Protein translocase subunit SecD"/>
    <property type="match status" value="1"/>
</dbReference>
<dbReference type="FunFam" id="3.30.70.3400:FF:000001">
    <property type="entry name" value="Protein translocase subunit SecD"/>
    <property type="match status" value="1"/>
</dbReference>
<dbReference type="FunFam" id="3.30.70.3400:FF:000002">
    <property type="entry name" value="Protein translocase subunit SecD"/>
    <property type="match status" value="1"/>
</dbReference>
<dbReference type="Gene3D" id="3.30.1360.200">
    <property type="match status" value="1"/>
</dbReference>
<dbReference type="Gene3D" id="3.30.70.260">
    <property type="match status" value="1"/>
</dbReference>
<dbReference type="Gene3D" id="3.30.70.3400">
    <property type="match status" value="2"/>
</dbReference>
<dbReference type="Gene3D" id="1.20.1640.10">
    <property type="entry name" value="Multidrug efflux transporter AcrB transmembrane domain"/>
    <property type="match status" value="1"/>
</dbReference>
<dbReference type="HAMAP" id="MF_01463_B">
    <property type="entry name" value="SecD_B"/>
    <property type="match status" value="1"/>
</dbReference>
<dbReference type="InterPro" id="IPR005791">
    <property type="entry name" value="SecD"/>
</dbReference>
<dbReference type="InterPro" id="IPR027398">
    <property type="entry name" value="SecD-TM"/>
</dbReference>
<dbReference type="InterPro" id="IPR022813">
    <property type="entry name" value="SecD/SecF_arch_bac"/>
</dbReference>
<dbReference type="InterPro" id="IPR022646">
    <property type="entry name" value="SecD/SecF_CS"/>
</dbReference>
<dbReference type="InterPro" id="IPR048631">
    <property type="entry name" value="SecD_1st"/>
</dbReference>
<dbReference type="InterPro" id="IPR048634">
    <property type="entry name" value="SecD_SecF_C"/>
</dbReference>
<dbReference type="InterPro" id="IPR055344">
    <property type="entry name" value="SecD_SecF_C_bact"/>
</dbReference>
<dbReference type="InterPro" id="IPR054384">
    <property type="entry name" value="SecDF_P1_head"/>
</dbReference>
<dbReference type="NCBIfam" id="TIGR00916">
    <property type="entry name" value="2A0604s01"/>
    <property type="match status" value="1"/>
</dbReference>
<dbReference type="NCBIfam" id="TIGR01129">
    <property type="entry name" value="secD"/>
    <property type="match status" value="1"/>
</dbReference>
<dbReference type="PANTHER" id="PTHR30081:SF1">
    <property type="entry name" value="PROTEIN TRANSLOCASE SUBUNIT SECD"/>
    <property type="match status" value="1"/>
</dbReference>
<dbReference type="PANTHER" id="PTHR30081">
    <property type="entry name" value="PROTEIN-EXPORT MEMBRANE PROTEIN SEC"/>
    <property type="match status" value="1"/>
</dbReference>
<dbReference type="Pfam" id="PF07549">
    <property type="entry name" value="Sec_GG"/>
    <property type="match status" value="1"/>
</dbReference>
<dbReference type="Pfam" id="PF13721">
    <property type="entry name" value="SecD-TM1"/>
    <property type="match status" value="1"/>
</dbReference>
<dbReference type="Pfam" id="PF21760">
    <property type="entry name" value="SecD_1st"/>
    <property type="match status" value="1"/>
</dbReference>
<dbReference type="Pfam" id="PF02355">
    <property type="entry name" value="SecD_SecF_C"/>
    <property type="match status" value="1"/>
</dbReference>
<dbReference type="Pfam" id="PF22599">
    <property type="entry name" value="SecDF_P1_head"/>
    <property type="match status" value="1"/>
</dbReference>
<dbReference type="SUPFAM" id="SSF82866">
    <property type="entry name" value="Multidrug efflux transporter AcrB transmembrane domain"/>
    <property type="match status" value="1"/>
</dbReference>
<sequence length="615" mass="66632">MLNRYPLWKYVMLIVVIVIGLLYALPNLFGEDPAVQITGARGVAASEQTLIQVQKTLQEEKITAKSVALEEGAILARFDSTDTQLRAREALMGVMGDKYVVALNLAPATPRWLAAIHAEPMKLGLDLRGGVHFLMEVDMDTALGKLQEQNIDSLRSDLREKGIPYTTVRKENNYGLSITFRDAKARDEAIAYLSKRHPDLVISSQGSNQLRAVMSDARLSEAREYAVQQNINILRNRVNQLGVAEPVVQRQGADRIVVELPGIQDTARAKEILGATATLEFRLVNTNVDQAAAASGRVPGDSEVKQTREGQPVVLYKRVILTGDHITDSTSSQDEYNQPQVNISLDSAGGNIMSNFTKDNIGKPMATLFVEYKDSGKKDANGRAVLVKQEEVINIANIQSRLGNSFRITGINNPNEARQLSLLLRAGALIAPIQIVEERTIGPTLGMQNIEQGLEACLAGLLVSILFMIIFYKKFGLIATSALIANLILIVGIMSLLPGATLSMPGIAGIVLTLAVAVDANVLINERIKEELSNGRTVQQAIDEGYRGAFSSIFDANITTLIKVIILYAVGTGAIKGFAITTGIGVATSMFTAIVGTRAIVNLLYGGKRVKKLSI</sequence>
<gene>
    <name type="primary">secD</name>
    <name type="ordered locus">b0408</name>
    <name type="ordered locus">JW0398</name>
</gene>
<organism>
    <name type="scientific">Escherichia coli (strain K12)</name>
    <dbReference type="NCBI Taxonomy" id="83333"/>
    <lineage>
        <taxon>Bacteria</taxon>
        <taxon>Pseudomonadati</taxon>
        <taxon>Pseudomonadota</taxon>
        <taxon>Gammaproteobacteria</taxon>
        <taxon>Enterobacterales</taxon>
        <taxon>Enterobacteriaceae</taxon>
        <taxon>Escherichia</taxon>
    </lineage>
</organism>
<comment type="function">
    <text evidence="3">Part of the Sec protein translocase complex. Interacts with the SecYEG preprotein conducting channel. SecDF uses the proton motive force (PMF) to complete protein translocation after the ATP-dependent function of SecA. The large periplasmic domain is thought to have a base and head domain joined by a hinge; movement of the hinge may be coupled to both proton transport and protein export, with the head domain capturing substrate, and a conformational change preventing backward movement and driving forward movement. Expression of V.alginolyticus SecD and SecF in E.coli confers Na(+)-dependent protein export, strongly suggesting SecDF functions via cation-coupled protein translocation.</text>
</comment>
<comment type="subunit">
    <text evidence="5">Forms a complex with SecF. Part of the essential Sec protein translocation apparatus which comprises SecA, SecYEG and auxiliary proteins SecDF-YajC and YidC. The SecDF-YidC-YajC translocase forms a supercomplex with SecYEG, called the holo-translocon (HTL) (PubMed:27435098). The stoichiometry of the super complex may be SecYEG:YidC:SecDF 4:3:1, YajC is in the reconstituted complex (with SecDF) but as no antibody is available it could not be quantified (PubMed:27435098).</text>
</comment>
<comment type="interaction">
    <interactant intactId="EBI-555724">
        <id>P0AG90</id>
    </interactant>
    <interactant intactId="EBI-555713">
        <id>P07395</id>
        <label>pheT</label>
    </interactant>
    <organismsDiffer>false</organismsDiffer>
    <experiments>4</experiments>
</comment>
<comment type="subcellular location">
    <subcellularLocation>
        <location evidence="1 2">Cell inner membrane</location>
        <topology evidence="1 2">Multi-pass membrane protein</topology>
    </subcellularLocation>
</comment>
<comment type="disruption phenotype">
    <text evidence="4">Disruption of both secD and SecF confers cold-sensitive growth (strain secD1(Cs)).</text>
</comment>
<comment type="similarity">
    <text evidence="6">Belongs to the SecD/SecF family. SecD subfamily.</text>
</comment>
<accession>P0AG90</accession>
<accession>P19673</accession>
<accession>P72348</accession>
<accession>P77531</accession>
<accession>Q2MC18</accession>
<protein>
    <recommendedName>
        <fullName>Protein translocase subunit SecD</fullName>
    </recommendedName>
    <alternativeName>
        <fullName>Sec translocon accessory complex subunit SecD</fullName>
    </alternativeName>
</protein>
<name>SECD_ECOLI</name>
<reference key="1">
    <citation type="journal article" date="1990" name="EMBO J.">
        <title>The secD locus of E.coli codes for two membrane proteins required for protein export.</title>
        <authorList>
            <person name="Gardel C."/>
            <person name="Johnson K."/>
            <person name="Jacq A."/>
            <person name="Beckwith J."/>
        </authorList>
    </citation>
    <scope>NUCLEOTIDE SEQUENCE [GENOMIC DNA]</scope>
    <scope>DISRUPTION PHENOTYPE</scope>
    <source>
        <strain>K12</strain>
    </source>
</reference>
<reference key="2">
    <citation type="journal article" date="1990" name="EMBO J.">
        <authorList>
            <person name="Gardel C."/>
            <person name="Johnson K."/>
            <person name="Jacq A."/>
            <person name="Beckwith J."/>
        </authorList>
    </citation>
    <scope>ERRATUM OF PUBMED:2170107</scope>
</reference>
<reference key="3">
    <citation type="submission" date="1997-01" db="EMBL/GenBank/DDBJ databases">
        <title>Sequence of minutes 4-25 of Escherichia coli.</title>
        <authorList>
            <person name="Chung E."/>
            <person name="Allen E."/>
            <person name="Araujo R."/>
            <person name="Aparicio A.M."/>
            <person name="Davis K."/>
            <person name="Duncan M."/>
            <person name="Federspiel N."/>
            <person name="Hyman R."/>
            <person name="Kalman S."/>
            <person name="Komp C."/>
            <person name="Kurdi O."/>
            <person name="Lew H."/>
            <person name="Lin D."/>
            <person name="Namath A."/>
            <person name="Oefner P."/>
            <person name="Roberts D."/>
            <person name="Schramm S."/>
            <person name="Davis R.W."/>
        </authorList>
    </citation>
    <scope>NUCLEOTIDE SEQUENCE [LARGE SCALE GENOMIC DNA]</scope>
    <source>
        <strain>K12 / MG1655 / ATCC 47076</strain>
    </source>
</reference>
<reference key="4">
    <citation type="journal article" date="1997" name="Science">
        <title>The complete genome sequence of Escherichia coli K-12.</title>
        <authorList>
            <person name="Blattner F.R."/>
            <person name="Plunkett G. III"/>
            <person name="Bloch C.A."/>
            <person name="Perna N.T."/>
            <person name="Burland V."/>
            <person name="Riley M."/>
            <person name="Collado-Vides J."/>
            <person name="Glasner J.D."/>
            <person name="Rode C.K."/>
            <person name="Mayhew G.F."/>
            <person name="Gregor J."/>
            <person name="Davis N.W."/>
            <person name="Kirkpatrick H.A."/>
            <person name="Goeden M.A."/>
            <person name="Rose D.J."/>
            <person name="Mau B."/>
            <person name="Shao Y."/>
        </authorList>
    </citation>
    <scope>NUCLEOTIDE SEQUENCE [LARGE SCALE GENOMIC DNA]</scope>
    <source>
        <strain>K12 / MG1655 / ATCC 47076</strain>
    </source>
</reference>
<reference key="5">
    <citation type="journal article" date="2006" name="Mol. Syst. Biol.">
        <title>Highly accurate genome sequences of Escherichia coli K-12 strains MG1655 and W3110.</title>
        <authorList>
            <person name="Hayashi K."/>
            <person name="Morooka N."/>
            <person name="Yamamoto Y."/>
            <person name="Fujita K."/>
            <person name="Isono K."/>
            <person name="Choi S."/>
            <person name="Ohtsubo E."/>
            <person name="Baba T."/>
            <person name="Wanner B.L."/>
            <person name="Mori H."/>
            <person name="Horiuchi T."/>
        </authorList>
    </citation>
    <scope>NUCLEOTIDE SEQUENCE [LARGE SCALE GENOMIC DNA]</scope>
    <source>
        <strain>K12 / W3110 / ATCC 27325 / DSM 5911</strain>
    </source>
</reference>
<reference key="6">
    <citation type="journal article" date="1994" name="J. Bacteriol.">
        <title>Genetic and molecular characterization of the Escherichia coli secD operon and its products.</title>
        <authorList>
            <person name="Pogliano K.J."/>
            <person name="Beckwith J."/>
        </authorList>
    </citation>
    <scope>NUCLEOTIDE SEQUENCE [GENOMIC DNA] OF 1-76</scope>
</reference>
<reference key="7">
    <citation type="journal article" date="2005" name="J. Biol. Chem.">
        <title>Protein complexes of the Escherichia coli cell envelope.</title>
        <authorList>
            <person name="Stenberg F."/>
            <person name="Chovanec P."/>
            <person name="Maslen S.L."/>
            <person name="Robinson C.V."/>
            <person name="Ilag L."/>
            <person name="von Heijne G."/>
            <person name="Daley D.O."/>
        </authorList>
    </citation>
    <scope>SUBCELLULAR LOCATION</scope>
    <source>
        <strain>BL21-DE3</strain>
    </source>
</reference>
<reference key="8">
    <citation type="journal article" date="2005" name="Science">
        <title>Global topology analysis of the Escherichia coli inner membrane proteome.</title>
        <authorList>
            <person name="Daley D.O."/>
            <person name="Rapp M."/>
            <person name="Granseth E."/>
            <person name="Melen K."/>
            <person name="Drew D."/>
            <person name="von Heijne G."/>
        </authorList>
    </citation>
    <scope>SUBCELLULAR LOCATION</scope>
    <source>
        <strain>K12 / MG1655 / ATCC 47076</strain>
    </source>
</reference>
<reference key="9">
    <citation type="journal article" date="2011" name="Nature">
        <title>Structure and function of a membrane component SecDF that enhances protein export.</title>
        <authorList>
            <person name="Tsukazaki T."/>
            <person name="Mori H."/>
            <person name="Echizen Y."/>
            <person name="Ishitani R."/>
            <person name="Fukai S."/>
            <person name="Tanaka T."/>
            <person name="Perederina A."/>
            <person name="Vassylyev D.G."/>
            <person name="Kohno T."/>
            <person name="Maturana A.D."/>
            <person name="Ito K."/>
            <person name="Nureki O."/>
        </authorList>
    </citation>
    <scope>FUNCTION IN TRANSLOCATION</scope>
    <scope>MUTAGENESIS OF ASP-519</scope>
</reference>
<reference key="10">
    <citation type="journal article" date="2016" name="Biochem. J.">
        <title>Membrane protein insertion and assembly by the bacterial holo-translocon SecYEG-SecDF-YajC-YidC.</title>
        <authorList>
            <person name="Komar J."/>
            <person name="Alvira S."/>
            <person name="Schulze R.J."/>
            <person name="Martin R."/>
            <person name="Lycklama a Nijeholt J.A."/>
            <person name="Lee S.C."/>
            <person name="Dafforn T.R."/>
            <person name="Deckers-Hebestreit G."/>
            <person name="Berger I."/>
            <person name="Schaffitzel C."/>
            <person name="Collinson I."/>
        </authorList>
    </citation>
    <scope>FUNCTION</scope>
    <scope>SUBUNIT</scope>
    <scope>SUBCELLULAR LOCATION</scope>
    <source>
        <strain>BL21-DE3</strain>
    </source>
</reference>
<keyword id="KW-0002">3D-structure</keyword>
<keyword id="KW-0997">Cell inner membrane</keyword>
<keyword id="KW-1003">Cell membrane</keyword>
<keyword id="KW-0472">Membrane</keyword>
<keyword id="KW-0653">Protein transport</keyword>
<keyword id="KW-1185">Reference proteome</keyword>
<keyword id="KW-0811">Translocation</keyword>
<keyword id="KW-0812">Transmembrane</keyword>
<keyword id="KW-1133">Transmembrane helix</keyword>
<keyword id="KW-0813">Transport</keyword>
<evidence type="ECO:0000269" key="1">
    <source>
    </source>
</evidence>
<evidence type="ECO:0000269" key="2">
    <source>
    </source>
</evidence>
<evidence type="ECO:0000269" key="3">
    <source>
    </source>
</evidence>
<evidence type="ECO:0000269" key="4">
    <source>
    </source>
</evidence>
<evidence type="ECO:0000269" key="5">
    <source>
    </source>
</evidence>
<evidence type="ECO:0000305" key="6"/>
<feature type="chain" id="PRO_0000095960" description="Protein translocase subunit SecD">
    <location>
        <begin position="1"/>
        <end position="615"/>
    </location>
</feature>
<feature type="topological domain" description="Cytoplasmic" evidence="6">
    <location>
        <begin position="1"/>
        <end position="9"/>
    </location>
</feature>
<feature type="transmembrane region" description="Helical" evidence="6">
    <location>
        <begin position="10"/>
        <end position="29"/>
    </location>
</feature>
<feature type="topological domain" description="Periplasmic" evidence="6">
    <location>
        <begin position="30"/>
        <end position="455"/>
    </location>
</feature>
<feature type="transmembrane region" description="Helical" evidence="6">
    <location>
        <begin position="456"/>
        <end position="472"/>
    </location>
</feature>
<feature type="topological domain" description="Cytoplasmic" evidence="6">
    <location>
        <begin position="473"/>
        <end position="476"/>
    </location>
</feature>
<feature type="topological domain" description="Periplasmic" evidence="6">
    <location>
        <begin position="498"/>
        <end position="501"/>
    </location>
</feature>
<feature type="transmembrane region" description="Helical" evidence="6">
    <location>
        <begin position="502"/>
        <end position="518"/>
    </location>
</feature>
<feature type="topological domain" description="Cytoplasmic" evidence="6">
    <location>
        <begin position="519"/>
        <end position="563"/>
    </location>
</feature>
<feature type="transmembrane region" description="Helical" evidence="6">
    <location>
        <begin position="564"/>
        <end position="580"/>
    </location>
</feature>
<feature type="topological domain" description="Periplasmic" evidence="6">
    <location>
        <begin position="581"/>
        <end position="585"/>
    </location>
</feature>
<feature type="transmembrane region" description="Helical" evidence="6">
    <location>
        <begin position="586"/>
        <end position="605"/>
    </location>
</feature>
<feature type="topological domain" description="Cytoplasmic" evidence="6">
    <location>
        <begin position="606"/>
        <end position="615"/>
    </location>
</feature>
<feature type="region of interest" description="Required for protein export">
    <location>
        <begin position="279"/>
        <end position="426"/>
    </location>
</feature>
<feature type="mutagenesis site" description="Abolishes protein translocation." evidence="3">
    <original>D</original>
    <variation>N</variation>
    <location>
        <position position="519"/>
    </location>
</feature>
<feature type="sequence conflict" description="In Ref. 1; CAA39634." evidence="6" ref="1">
    <original>F</original>
    <variation>S</variation>
    <location>
        <position position="78"/>
    </location>
</feature>
<feature type="sequence conflict" description="In Ref. 1; CAA39634." evidence="6" ref="1">
    <original>R</original>
    <variation>A</variation>
    <location>
        <position position="155"/>
    </location>
</feature>
<proteinExistence type="evidence at protein level"/>